<accession>Q8Z681</accession>
<accession>Q7CAG0</accession>
<protein>
    <recommendedName>
        <fullName evidence="1">Protein YcgL</fullName>
    </recommendedName>
</protein>
<gene>
    <name evidence="1" type="primary">ycgL</name>
    <name type="ordered locus">STY1943</name>
    <name type="ordered locus">t1064</name>
</gene>
<sequence length="110" mass="12611">MRQVTIPLIQSKSMFCVIYRSSKRDQTYLYVEKKDDFSRVPDALMKGFGQPQLAMMLPLDGRKKLVNAELEKVKQALSEQGYYLQLPPPPEDLLKQHLSSVGQNTSHADR</sequence>
<organism>
    <name type="scientific">Salmonella typhi</name>
    <dbReference type="NCBI Taxonomy" id="90370"/>
    <lineage>
        <taxon>Bacteria</taxon>
        <taxon>Pseudomonadati</taxon>
        <taxon>Pseudomonadota</taxon>
        <taxon>Gammaproteobacteria</taxon>
        <taxon>Enterobacterales</taxon>
        <taxon>Enterobacteriaceae</taxon>
        <taxon>Salmonella</taxon>
    </lineage>
</organism>
<proteinExistence type="inferred from homology"/>
<name>YCGL_SALTI</name>
<reference key="1">
    <citation type="journal article" date="2001" name="Nature">
        <title>Complete genome sequence of a multiple drug resistant Salmonella enterica serovar Typhi CT18.</title>
        <authorList>
            <person name="Parkhill J."/>
            <person name="Dougan G."/>
            <person name="James K.D."/>
            <person name="Thomson N.R."/>
            <person name="Pickard D."/>
            <person name="Wain J."/>
            <person name="Churcher C.M."/>
            <person name="Mungall K.L."/>
            <person name="Bentley S.D."/>
            <person name="Holden M.T.G."/>
            <person name="Sebaihia M."/>
            <person name="Baker S."/>
            <person name="Basham D."/>
            <person name="Brooks K."/>
            <person name="Chillingworth T."/>
            <person name="Connerton P."/>
            <person name="Cronin A."/>
            <person name="Davis P."/>
            <person name="Davies R.M."/>
            <person name="Dowd L."/>
            <person name="White N."/>
            <person name="Farrar J."/>
            <person name="Feltwell T."/>
            <person name="Hamlin N."/>
            <person name="Haque A."/>
            <person name="Hien T.T."/>
            <person name="Holroyd S."/>
            <person name="Jagels K."/>
            <person name="Krogh A."/>
            <person name="Larsen T.S."/>
            <person name="Leather S."/>
            <person name="Moule S."/>
            <person name="O'Gaora P."/>
            <person name="Parry C."/>
            <person name="Quail M.A."/>
            <person name="Rutherford K.M."/>
            <person name="Simmonds M."/>
            <person name="Skelton J."/>
            <person name="Stevens K."/>
            <person name="Whitehead S."/>
            <person name="Barrell B.G."/>
        </authorList>
    </citation>
    <scope>NUCLEOTIDE SEQUENCE [LARGE SCALE GENOMIC DNA]</scope>
    <source>
        <strain>CT18</strain>
    </source>
</reference>
<reference key="2">
    <citation type="journal article" date="2003" name="J. Bacteriol.">
        <title>Comparative genomics of Salmonella enterica serovar Typhi strains Ty2 and CT18.</title>
        <authorList>
            <person name="Deng W."/>
            <person name="Liou S.-R."/>
            <person name="Plunkett G. III"/>
            <person name="Mayhew G.F."/>
            <person name="Rose D.J."/>
            <person name="Burland V."/>
            <person name="Kodoyianni V."/>
            <person name="Schwartz D.C."/>
            <person name="Blattner F.R."/>
        </authorList>
    </citation>
    <scope>NUCLEOTIDE SEQUENCE [LARGE SCALE GENOMIC DNA]</scope>
    <source>
        <strain>ATCC 700931 / Ty2</strain>
    </source>
</reference>
<dbReference type="EMBL" id="AE014613">
    <property type="protein sequence ID" value="AAO68730.1"/>
    <property type="molecule type" value="Genomic_DNA"/>
</dbReference>
<dbReference type="EMBL" id="AL513382">
    <property type="protein sequence ID" value="CAD05496.1"/>
    <property type="molecule type" value="Genomic_DNA"/>
</dbReference>
<dbReference type="RefSeq" id="NP_456320.1">
    <property type="nucleotide sequence ID" value="NC_003198.1"/>
</dbReference>
<dbReference type="SMR" id="Q8Z681"/>
<dbReference type="STRING" id="220341.gene:17585861"/>
<dbReference type="KEGG" id="stt:t1064"/>
<dbReference type="KEGG" id="sty:STY1943"/>
<dbReference type="PATRIC" id="fig|220341.7.peg.1960"/>
<dbReference type="eggNOG" id="COG3100">
    <property type="taxonomic scope" value="Bacteria"/>
</dbReference>
<dbReference type="HOGENOM" id="CLU_155118_1_0_6"/>
<dbReference type="OMA" id="MICAVYK"/>
<dbReference type="Proteomes" id="UP000000541">
    <property type="component" value="Chromosome"/>
</dbReference>
<dbReference type="Proteomes" id="UP000002670">
    <property type="component" value="Chromosome"/>
</dbReference>
<dbReference type="Gene3D" id="3.10.510.20">
    <property type="entry name" value="YcgL domain"/>
    <property type="match status" value="1"/>
</dbReference>
<dbReference type="HAMAP" id="MF_01866">
    <property type="entry name" value="UPF0745"/>
    <property type="match status" value="1"/>
</dbReference>
<dbReference type="InterPro" id="IPR038068">
    <property type="entry name" value="YcgL-like_sf"/>
</dbReference>
<dbReference type="InterPro" id="IPR027354">
    <property type="entry name" value="YcgL_dom"/>
</dbReference>
<dbReference type="PANTHER" id="PTHR38109">
    <property type="entry name" value="PROTEIN YCGL"/>
    <property type="match status" value="1"/>
</dbReference>
<dbReference type="PANTHER" id="PTHR38109:SF1">
    <property type="entry name" value="PROTEIN YCGL"/>
    <property type="match status" value="1"/>
</dbReference>
<dbReference type="Pfam" id="PF05166">
    <property type="entry name" value="YcgL"/>
    <property type="match status" value="1"/>
</dbReference>
<dbReference type="SUPFAM" id="SSF160191">
    <property type="entry name" value="YcgL-like"/>
    <property type="match status" value="1"/>
</dbReference>
<dbReference type="PROSITE" id="PS51648">
    <property type="entry name" value="YCGL"/>
    <property type="match status" value="1"/>
</dbReference>
<evidence type="ECO:0000255" key="1">
    <source>
        <dbReference type="HAMAP-Rule" id="MF_01866"/>
    </source>
</evidence>
<evidence type="ECO:0000256" key="2">
    <source>
        <dbReference type="SAM" id="MobiDB-lite"/>
    </source>
</evidence>
<feature type="chain" id="PRO_0000375360" description="Protein YcgL">
    <location>
        <begin position="1"/>
        <end position="110"/>
    </location>
</feature>
<feature type="domain" description="YcgL" evidence="1">
    <location>
        <begin position="14"/>
        <end position="98"/>
    </location>
</feature>
<feature type="region of interest" description="Disordered" evidence="2">
    <location>
        <begin position="88"/>
        <end position="110"/>
    </location>
</feature>
<feature type="compositionally biased region" description="Polar residues" evidence="2">
    <location>
        <begin position="97"/>
        <end position="110"/>
    </location>
</feature>